<keyword id="KW-1003">Cell membrane</keyword>
<keyword id="KW-0472">Membrane</keyword>
<keyword id="KW-1185">Reference proteome</keyword>
<keyword id="KW-0812">Transmembrane</keyword>
<keyword id="KW-1133">Transmembrane helix</keyword>
<organism>
    <name type="scientific">Mycobacterium bovis (strain ATCC BAA-935 / AF2122/97)</name>
    <dbReference type="NCBI Taxonomy" id="233413"/>
    <lineage>
        <taxon>Bacteria</taxon>
        <taxon>Bacillati</taxon>
        <taxon>Actinomycetota</taxon>
        <taxon>Actinomycetes</taxon>
        <taxon>Mycobacteriales</taxon>
        <taxon>Mycobacteriaceae</taxon>
        <taxon>Mycobacterium</taxon>
        <taxon>Mycobacterium tuberculosis complex</taxon>
    </lineage>
</organism>
<name>DIPZ_MYCBO</name>
<sequence>MVESRRAAAAASAYASRCGIAPATSQRSLATPPTISVPSGEGRCRCHVARGAGRDPRRRLRRRRWCGRCGYHSHLTGGEFDVNRLCQQRSRERSCQLVAVPADPRPKRQRITDVLTLALVGFLGGLITGISPCILPVLPVIFFSGAQSVDAAQVAKPEGAVAVRRKRALSATLRPYRVIGGLVLSFGMVTLLGSALLSVLHLPQDAIRWAALVALVAIGAGLIFPRFEQLLEKPFSRIPQKQIVTRSNGFGLGLALGVLYVPCAGPILAAIVVAGATATIGLGTVVLTATFALGAALPLLFFALAGQRIAERVGAFRRRQREIRIATGSVTILLAVALVFDLPAALQRAIPDYTASLQQQISTGTEIREQLNLGGIVNAQNAQLSNCSDGAAQLESCGTAPDLKGITGWLNTPGNKPIDLKSLRGKVVLIDFWAYSCINCQRAIPHVVGWYQAYKDSGLAVIGVHTPEYAFEKVPGNVAKGAANLGISYPIALDNNYATWTNYRNRYWPAEYLIDATGTVRHIKFGEGDYNVTETLVRQLLNDAKPGVKLPQPSSTTTPDLTPRAALTPETYFGVGKVVNYGGGGAYDEGSAVFDYPPSLAANSFALRGRWALDYQGATSDGNDAAIKLNYHAKDVYIVVGGTGTLTVVRDGKPATLPISGPPTTHQVVAGDRLASETLEVRPSKGLQVFSFTYG</sequence>
<feature type="chain" id="PRO_0000079910" description="Protein DipZ">
    <location>
        <begin position="1"/>
        <end position="695"/>
    </location>
</feature>
<feature type="transmembrane region" description="Helical" evidence="1">
    <location>
        <begin position="123"/>
        <end position="143"/>
    </location>
</feature>
<feature type="transmembrane region" description="Helical" evidence="1">
    <location>
        <begin position="179"/>
        <end position="199"/>
    </location>
</feature>
<feature type="transmembrane region" description="Helical" evidence="1">
    <location>
        <begin position="205"/>
        <end position="225"/>
    </location>
</feature>
<feature type="transmembrane region" description="Helical" evidence="1">
    <location>
        <begin position="254"/>
        <end position="274"/>
    </location>
</feature>
<feature type="transmembrane region" description="Helical" evidence="1">
    <location>
        <begin position="285"/>
        <end position="305"/>
    </location>
</feature>
<feature type="transmembrane region" description="Helical" evidence="1">
    <location>
        <begin position="325"/>
        <end position="345"/>
    </location>
</feature>
<feature type="domain" description="Thioredoxin" evidence="2">
    <location>
        <begin position="394"/>
        <end position="542"/>
    </location>
</feature>
<evidence type="ECO:0000255" key="1"/>
<evidence type="ECO:0000255" key="2">
    <source>
        <dbReference type="PROSITE-ProRule" id="PRU00691"/>
    </source>
</evidence>
<evidence type="ECO:0000305" key="3"/>
<gene>
    <name type="primary">dipZ</name>
    <name type="ordered locus">BQ2027_MB2899</name>
</gene>
<proteinExistence type="predicted"/>
<dbReference type="EMBL" id="LT708304">
    <property type="protein sequence ID" value="SIU01520.1"/>
    <property type="molecule type" value="Genomic_DNA"/>
</dbReference>
<dbReference type="RefSeq" id="NP_856544.1">
    <property type="nucleotide sequence ID" value="NC_002945.3"/>
</dbReference>
<dbReference type="SMR" id="P59960"/>
<dbReference type="KEGG" id="mbo:BQ2027_MB2899"/>
<dbReference type="PATRIC" id="fig|233413.5.peg.3182"/>
<dbReference type="Proteomes" id="UP000001419">
    <property type="component" value="Chromosome"/>
</dbReference>
<dbReference type="GO" id="GO:0005886">
    <property type="term" value="C:plasma membrane"/>
    <property type="evidence" value="ECO:0007669"/>
    <property type="project" value="UniProtKB-SubCell"/>
</dbReference>
<dbReference type="GO" id="GO:0016209">
    <property type="term" value="F:antioxidant activity"/>
    <property type="evidence" value="ECO:0007669"/>
    <property type="project" value="InterPro"/>
</dbReference>
<dbReference type="GO" id="GO:0016491">
    <property type="term" value="F:oxidoreductase activity"/>
    <property type="evidence" value="ECO:0007669"/>
    <property type="project" value="InterPro"/>
</dbReference>
<dbReference type="GO" id="GO:0017004">
    <property type="term" value="P:cytochrome complex assembly"/>
    <property type="evidence" value="ECO:0007669"/>
    <property type="project" value="InterPro"/>
</dbReference>
<dbReference type="CDD" id="cd03012">
    <property type="entry name" value="TlpA_like_DipZ_like"/>
    <property type="match status" value="1"/>
</dbReference>
<dbReference type="Gene3D" id="2.60.120.260">
    <property type="entry name" value="Galactose-binding domain-like"/>
    <property type="match status" value="1"/>
</dbReference>
<dbReference type="Gene3D" id="3.40.30.10">
    <property type="entry name" value="Glutaredoxin"/>
    <property type="match status" value="1"/>
</dbReference>
<dbReference type="InterPro" id="IPR000866">
    <property type="entry name" value="AhpC/TSA"/>
</dbReference>
<dbReference type="InterPro" id="IPR003834">
    <property type="entry name" value="Cyt_c_assmbl_TM_dom"/>
</dbReference>
<dbReference type="InterPro" id="IPR036249">
    <property type="entry name" value="Thioredoxin-like_sf"/>
</dbReference>
<dbReference type="InterPro" id="IPR041017">
    <property type="entry name" value="Thioredoxin_10"/>
</dbReference>
<dbReference type="InterPro" id="IPR013766">
    <property type="entry name" value="Thioredoxin_domain"/>
</dbReference>
<dbReference type="InterPro" id="IPR050553">
    <property type="entry name" value="Thioredoxin_ResA/DsbE_sf"/>
</dbReference>
<dbReference type="PANTHER" id="PTHR42852:SF13">
    <property type="entry name" value="PROTEIN DIPZ"/>
    <property type="match status" value="1"/>
</dbReference>
<dbReference type="PANTHER" id="PTHR42852">
    <property type="entry name" value="THIOL:DISULFIDE INTERCHANGE PROTEIN DSBE"/>
    <property type="match status" value="1"/>
</dbReference>
<dbReference type="Pfam" id="PF00578">
    <property type="entry name" value="AhpC-TSA"/>
    <property type="match status" value="1"/>
</dbReference>
<dbReference type="Pfam" id="PF02683">
    <property type="entry name" value="DsbD_TM"/>
    <property type="match status" value="1"/>
</dbReference>
<dbReference type="Pfam" id="PF17991">
    <property type="entry name" value="Thioredoxin_10"/>
    <property type="match status" value="1"/>
</dbReference>
<dbReference type="SUPFAM" id="SSF52833">
    <property type="entry name" value="Thioredoxin-like"/>
    <property type="match status" value="1"/>
</dbReference>
<dbReference type="PROSITE" id="PS51352">
    <property type="entry name" value="THIOREDOXIN_2"/>
    <property type="match status" value="1"/>
</dbReference>
<reference key="1">
    <citation type="journal article" date="2003" name="Proc. Natl. Acad. Sci. U.S.A.">
        <title>The complete genome sequence of Mycobacterium bovis.</title>
        <authorList>
            <person name="Garnier T."/>
            <person name="Eiglmeier K."/>
            <person name="Camus J.-C."/>
            <person name="Medina N."/>
            <person name="Mansoor H."/>
            <person name="Pryor M."/>
            <person name="Duthoy S."/>
            <person name="Grondin S."/>
            <person name="Lacroix C."/>
            <person name="Monsempe C."/>
            <person name="Simon S."/>
            <person name="Harris B."/>
            <person name="Atkin R."/>
            <person name="Doggett J."/>
            <person name="Mayes R."/>
            <person name="Keating L."/>
            <person name="Wheeler P.R."/>
            <person name="Parkhill J."/>
            <person name="Barrell B.G."/>
            <person name="Cole S.T."/>
            <person name="Gordon S.V."/>
            <person name="Hewinson R.G."/>
        </authorList>
    </citation>
    <scope>NUCLEOTIDE SEQUENCE [LARGE SCALE GENOMIC DNA]</scope>
    <source>
        <strain>ATCC BAA-935 / AF2122/97</strain>
    </source>
</reference>
<reference key="2">
    <citation type="journal article" date="2017" name="Genome Announc.">
        <title>Updated reference genome sequence and annotation of Mycobacterium bovis AF2122/97.</title>
        <authorList>
            <person name="Malone K.M."/>
            <person name="Farrell D."/>
            <person name="Stuber T.P."/>
            <person name="Schubert O.T."/>
            <person name="Aebersold R."/>
            <person name="Robbe-Austerman S."/>
            <person name="Gordon S.V."/>
        </authorList>
    </citation>
    <scope>NUCLEOTIDE SEQUENCE [LARGE SCALE GENOMIC DNA]</scope>
    <scope>GENOME REANNOTATION</scope>
    <source>
        <strain>ATCC BAA-935 / AF2122/97</strain>
    </source>
</reference>
<accession>P59960</accession>
<accession>A0A1R3Y2G2</accession>
<accession>X2BMN3</accession>
<protein>
    <recommendedName>
        <fullName>Protein DipZ</fullName>
    </recommendedName>
</protein>
<comment type="subcellular location">
    <subcellularLocation>
        <location evidence="3">Cell membrane</location>
        <topology evidence="3">Multi-pass membrane protein</topology>
    </subcellularLocation>
</comment>